<reference key="1">
    <citation type="submission" date="2007-06" db="EMBL/GenBank/DDBJ databases">
        <title>Complete sequence of Methanococcus maripaludis C7.</title>
        <authorList>
            <consortium name="US DOE Joint Genome Institute"/>
            <person name="Copeland A."/>
            <person name="Lucas S."/>
            <person name="Lapidus A."/>
            <person name="Barry K."/>
            <person name="Glavina del Rio T."/>
            <person name="Dalin E."/>
            <person name="Tice H."/>
            <person name="Pitluck S."/>
            <person name="Clum A."/>
            <person name="Schmutz J."/>
            <person name="Larimer F."/>
            <person name="Land M."/>
            <person name="Hauser L."/>
            <person name="Kyrpides N."/>
            <person name="Anderson I."/>
            <person name="Sieprawska-Lupa M."/>
            <person name="Whitman W.B."/>
            <person name="Richardson P."/>
        </authorList>
    </citation>
    <scope>NUCLEOTIDE SEQUENCE [LARGE SCALE GENOMIC DNA]</scope>
    <source>
        <strain>C7 / ATCC BAA-1331</strain>
    </source>
</reference>
<proteinExistence type="inferred from homology"/>
<accession>A6VH81</accession>
<comment type="catalytic activity">
    <reaction evidence="1">
        <text>tRNA(Phe) + L-phenylalanine + ATP = L-phenylalanyl-tRNA(Phe) + AMP + diphosphate + H(+)</text>
        <dbReference type="Rhea" id="RHEA:19413"/>
        <dbReference type="Rhea" id="RHEA-COMP:9668"/>
        <dbReference type="Rhea" id="RHEA-COMP:9699"/>
        <dbReference type="ChEBI" id="CHEBI:15378"/>
        <dbReference type="ChEBI" id="CHEBI:30616"/>
        <dbReference type="ChEBI" id="CHEBI:33019"/>
        <dbReference type="ChEBI" id="CHEBI:58095"/>
        <dbReference type="ChEBI" id="CHEBI:78442"/>
        <dbReference type="ChEBI" id="CHEBI:78531"/>
        <dbReference type="ChEBI" id="CHEBI:456215"/>
        <dbReference type="EC" id="6.1.1.20"/>
    </reaction>
</comment>
<comment type="cofactor">
    <cofactor evidence="1">
        <name>Mg(2+)</name>
        <dbReference type="ChEBI" id="CHEBI:18420"/>
    </cofactor>
    <text evidence="1">Binds 2 magnesium ions per tetramer.</text>
</comment>
<comment type="subunit">
    <text evidence="1">Tetramer of two alpha and two beta subunits.</text>
</comment>
<comment type="subcellular location">
    <subcellularLocation>
        <location evidence="1">Cytoplasm</location>
    </subcellularLocation>
</comment>
<comment type="similarity">
    <text evidence="1">Belongs to the class-II aminoacyl-tRNA synthetase family. Phe-tRNA synthetase alpha subunit type 2 subfamily.</text>
</comment>
<organism>
    <name type="scientific">Methanococcus maripaludis (strain C7 / ATCC BAA-1331)</name>
    <dbReference type="NCBI Taxonomy" id="426368"/>
    <lineage>
        <taxon>Archaea</taxon>
        <taxon>Methanobacteriati</taxon>
        <taxon>Methanobacteriota</taxon>
        <taxon>Methanomada group</taxon>
        <taxon>Methanococci</taxon>
        <taxon>Methanococcales</taxon>
        <taxon>Methanococcaceae</taxon>
        <taxon>Methanococcus</taxon>
    </lineage>
</organism>
<evidence type="ECO:0000255" key="1">
    <source>
        <dbReference type="HAMAP-Rule" id="MF_00282"/>
    </source>
</evidence>
<dbReference type="EC" id="6.1.1.20" evidence="1"/>
<dbReference type="EMBL" id="CP000745">
    <property type="protein sequence ID" value="ABR65807.1"/>
    <property type="molecule type" value="Genomic_DNA"/>
</dbReference>
<dbReference type="SMR" id="A6VH81"/>
<dbReference type="STRING" id="426368.MmarC7_0740"/>
<dbReference type="KEGG" id="mmz:MmarC7_0740"/>
<dbReference type="eggNOG" id="arCOG00410">
    <property type="taxonomic scope" value="Archaea"/>
</dbReference>
<dbReference type="HOGENOM" id="CLU_025086_2_2_2"/>
<dbReference type="OrthoDB" id="372178at2157"/>
<dbReference type="GO" id="GO:0005737">
    <property type="term" value="C:cytoplasm"/>
    <property type="evidence" value="ECO:0007669"/>
    <property type="project" value="UniProtKB-SubCell"/>
</dbReference>
<dbReference type="GO" id="GO:0005524">
    <property type="term" value="F:ATP binding"/>
    <property type="evidence" value="ECO:0007669"/>
    <property type="project" value="UniProtKB-UniRule"/>
</dbReference>
<dbReference type="GO" id="GO:0000287">
    <property type="term" value="F:magnesium ion binding"/>
    <property type="evidence" value="ECO:0007669"/>
    <property type="project" value="UniProtKB-UniRule"/>
</dbReference>
<dbReference type="GO" id="GO:0004826">
    <property type="term" value="F:phenylalanine-tRNA ligase activity"/>
    <property type="evidence" value="ECO:0007669"/>
    <property type="project" value="UniProtKB-UniRule"/>
</dbReference>
<dbReference type="GO" id="GO:0000049">
    <property type="term" value="F:tRNA binding"/>
    <property type="evidence" value="ECO:0007669"/>
    <property type="project" value="InterPro"/>
</dbReference>
<dbReference type="GO" id="GO:0006432">
    <property type="term" value="P:phenylalanyl-tRNA aminoacylation"/>
    <property type="evidence" value="ECO:0007669"/>
    <property type="project" value="UniProtKB-UniRule"/>
</dbReference>
<dbReference type="CDD" id="cd00496">
    <property type="entry name" value="PheRS_alpha_core"/>
    <property type="match status" value="1"/>
</dbReference>
<dbReference type="FunFam" id="3.30.930.10:FF:000095">
    <property type="entry name" value="Phenylalanine--tRNA ligase alpha subunit"/>
    <property type="match status" value="1"/>
</dbReference>
<dbReference type="Gene3D" id="1.10.10.2320">
    <property type="match status" value="1"/>
</dbReference>
<dbReference type="Gene3D" id="1.10.10.2330">
    <property type="match status" value="1"/>
</dbReference>
<dbReference type="Gene3D" id="3.30.1370.240">
    <property type="match status" value="1"/>
</dbReference>
<dbReference type="Gene3D" id="3.30.930.10">
    <property type="entry name" value="Bira Bifunctional Protein, Domain 2"/>
    <property type="match status" value="1"/>
</dbReference>
<dbReference type="HAMAP" id="MF_00282">
    <property type="entry name" value="Phe_tRNA_synth_alpha2"/>
    <property type="match status" value="1"/>
</dbReference>
<dbReference type="InterPro" id="IPR006195">
    <property type="entry name" value="aa-tRNA-synth_II"/>
</dbReference>
<dbReference type="InterPro" id="IPR045864">
    <property type="entry name" value="aa-tRNA-synth_II/BPL/LPL"/>
</dbReference>
<dbReference type="InterPro" id="IPR004529">
    <property type="entry name" value="Phe-tRNA-synth_IIc_asu"/>
</dbReference>
<dbReference type="InterPro" id="IPR022917">
    <property type="entry name" value="Phe_tRNA_ligase_alpha_bac/arc"/>
</dbReference>
<dbReference type="InterPro" id="IPR002319">
    <property type="entry name" value="Phenylalanyl-tRNA_Synthase"/>
</dbReference>
<dbReference type="NCBIfam" id="TIGR00468">
    <property type="entry name" value="pheS"/>
    <property type="match status" value="1"/>
</dbReference>
<dbReference type="NCBIfam" id="NF003210">
    <property type="entry name" value="PRK04172.1"/>
    <property type="match status" value="1"/>
</dbReference>
<dbReference type="PANTHER" id="PTHR11538:SF40">
    <property type="entry name" value="PHENYLALANINE--TRNA LIGASE ALPHA SUBUNIT"/>
    <property type="match status" value="1"/>
</dbReference>
<dbReference type="PANTHER" id="PTHR11538">
    <property type="entry name" value="PHENYLALANYL-TRNA SYNTHETASE"/>
    <property type="match status" value="1"/>
</dbReference>
<dbReference type="Pfam" id="PF01409">
    <property type="entry name" value="tRNA-synt_2d"/>
    <property type="match status" value="1"/>
</dbReference>
<dbReference type="SUPFAM" id="SSF55681">
    <property type="entry name" value="Class II aaRS and biotin synthetases"/>
    <property type="match status" value="1"/>
</dbReference>
<dbReference type="PROSITE" id="PS50862">
    <property type="entry name" value="AA_TRNA_LIGASE_II"/>
    <property type="match status" value="1"/>
</dbReference>
<keyword id="KW-0030">Aminoacyl-tRNA synthetase</keyword>
<keyword id="KW-0067">ATP-binding</keyword>
<keyword id="KW-0963">Cytoplasm</keyword>
<keyword id="KW-0436">Ligase</keyword>
<keyword id="KW-0460">Magnesium</keyword>
<keyword id="KW-0479">Metal-binding</keyword>
<keyword id="KW-0547">Nucleotide-binding</keyword>
<keyword id="KW-0648">Protein biosynthesis</keyword>
<name>SYFA_METM7</name>
<protein>
    <recommendedName>
        <fullName evidence="1">Phenylalanine--tRNA ligase alpha subunit</fullName>
        <ecNumber evidence="1">6.1.1.20</ecNumber>
    </recommendedName>
    <alternativeName>
        <fullName evidence="1">Phenylalanyl-tRNA synthetase alpha subunit</fullName>
        <shortName evidence="1">PheRS</shortName>
    </alternativeName>
</protein>
<sequence length="501" mass="58159">MELHNDEKRLLKAFQDSNKKIMNLEELSEYIEKEKVMRAAFWLSGRDFLEIIENKTRVCELTELGKNSLDSEIPERKVANYIKENNLESIPIKDLSKILEKDETGAALGNLKKKELVTIDKGNIVFKNLDYKDNEEEVLKKVSEDFNLSNYSEDEVKIIENLKKRGFLKINEVVDRSFELKSAGIDFIKNPIEIKEEITQLTREMIVSGKWNDYTIRPYDAKIPTEEIYPVKAHPMSKIIQEVNEVLISMGFKEVKSQIVQTEFWNFDTLFEPQDHPARDMQDTFFVKYPNTGIVPKDLLEKVKGIHECGTIGSEKISKGWCYKFDEKVSERTVLRTHTTVSSIKYLASLSETERENPQKVFCIDRVFRNETIDYKHLPEFYQCEGIVMAEDVNFDNLVGVLKEFLRKLGFEKVRIRPAYFPFTEPSLEAEVYMEGKGWLELLGAGVFRPEVLEPFGIKKPVLAWGIGLSRLAMLRLGLTDIRELHKNDIEWLKKTAVSEK</sequence>
<feature type="chain" id="PRO_1000007663" description="Phenylalanine--tRNA ligase alpha subunit">
    <location>
        <begin position="1"/>
        <end position="501"/>
    </location>
</feature>
<feature type="binding site" evidence="1">
    <location>
        <position position="340"/>
    </location>
    <ligand>
        <name>L-phenylalanine</name>
        <dbReference type="ChEBI" id="CHEBI:58095"/>
    </ligand>
</feature>
<feature type="binding site" evidence="1">
    <location>
        <position position="423"/>
    </location>
    <ligand>
        <name>L-phenylalanine</name>
        <dbReference type="ChEBI" id="CHEBI:58095"/>
    </ligand>
</feature>
<feature type="binding site" evidence="1">
    <location>
        <position position="425"/>
    </location>
    <ligand>
        <name>Mg(2+)</name>
        <dbReference type="ChEBI" id="CHEBI:18420"/>
        <note>shared with beta subunit</note>
    </ligand>
</feature>
<feature type="binding site" evidence="1">
    <location>
        <position position="448"/>
    </location>
    <ligand>
        <name>L-phenylalanine</name>
        <dbReference type="ChEBI" id="CHEBI:58095"/>
    </ligand>
</feature>
<gene>
    <name evidence="1" type="primary">pheS</name>
    <name type="ordered locus">MmarC7_0740</name>
</gene>